<proteinExistence type="inferred from homology"/>
<gene>
    <name evidence="1" type="primary">petG</name>
</gene>
<organism>
    <name type="scientific">Drimys granadensis</name>
    <dbReference type="NCBI Taxonomy" id="224735"/>
    <lineage>
        <taxon>Eukaryota</taxon>
        <taxon>Viridiplantae</taxon>
        <taxon>Streptophyta</taxon>
        <taxon>Embryophyta</taxon>
        <taxon>Tracheophyta</taxon>
        <taxon>Spermatophyta</taxon>
        <taxon>Magnoliopsida</taxon>
        <taxon>Magnoliidae</taxon>
        <taxon>Canellales</taxon>
        <taxon>Winteraceae</taxon>
        <taxon>Drimys</taxon>
    </lineage>
</organism>
<dbReference type="EMBL" id="DQ887676">
    <property type="protein sequence ID" value="ABH88316.1"/>
    <property type="molecule type" value="Genomic_DNA"/>
</dbReference>
<dbReference type="RefSeq" id="YP_784405.1">
    <property type="nucleotide sequence ID" value="NC_008456.1"/>
</dbReference>
<dbReference type="SMR" id="Q06GX8"/>
<dbReference type="GeneID" id="4363581"/>
<dbReference type="GO" id="GO:0009535">
    <property type="term" value="C:chloroplast thylakoid membrane"/>
    <property type="evidence" value="ECO:0007669"/>
    <property type="project" value="UniProtKB-SubCell"/>
</dbReference>
<dbReference type="GO" id="GO:0009512">
    <property type="term" value="C:cytochrome b6f complex"/>
    <property type="evidence" value="ECO:0007669"/>
    <property type="project" value="InterPro"/>
</dbReference>
<dbReference type="GO" id="GO:0045158">
    <property type="term" value="F:electron transporter, transferring electrons within cytochrome b6/f complex of photosystem II activity"/>
    <property type="evidence" value="ECO:0007669"/>
    <property type="project" value="UniProtKB-UniRule"/>
</dbReference>
<dbReference type="GO" id="GO:0017004">
    <property type="term" value="P:cytochrome complex assembly"/>
    <property type="evidence" value="ECO:0007669"/>
    <property type="project" value="UniProtKB-UniRule"/>
</dbReference>
<dbReference type="GO" id="GO:0015979">
    <property type="term" value="P:photosynthesis"/>
    <property type="evidence" value="ECO:0007669"/>
    <property type="project" value="UniProtKB-KW"/>
</dbReference>
<dbReference type="HAMAP" id="MF_00432">
    <property type="entry name" value="Cytb6_f_PetG"/>
    <property type="match status" value="1"/>
</dbReference>
<dbReference type="InterPro" id="IPR003683">
    <property type="entry name" value="Cyt_6/f_cplx_su5"/>
</dbReference>
<dbReference type="InterPro" id="IPR036099">
    <property type="entry name" value="Cyt_6/f_cplx_su5_sf"/>
</dbReference>
<dbReference type="NCBIfam" id="NF001907">
    <property type="entry name" value="PRK00665.1"/>
    <property type="match status" value="1"/>
</dbReference>
<dbReference type="Pfam" id="PF02529">
    <property type="entry name" value="PetG"/>
    <property type="match status" value="1"/>
</dbReference>
<dbReference type="PIRSF" id="PIRSF000034">
    <property type="entry name" value="Cyt_b6-f_V"/>
    <property type="match status" value="1"/>
</dbReference>
<dbReference type="SUPFAM" id="SSF103446">
    <property type="entry name" value="PetG subunit of the cytochrome b6f complex"/>
    <property type="match status" value="1"/>
</dbReference>
<sequence>MIEVFLFGIVLGLIPITLAGLFVTAYLQYRRGDQLDL</sequence>
<reference key="1">
    <citation type="journal article" date="2006" name="BMC Evol. Biol.">
        <title>Complete plastid genome sequences of Drimys, Liriodendron, and Piper: implications for the phylogenetic relationships of magnoliids.</title>
        <authorList>
            <person name="Cai Z."/>
            <person name="Penaflor C."/>
            <person name="Kuehl J.V."/>
            <person name="Leebens-Mack J."/>
            <person name="Carlson J.E."/>
            <person name="dePamphilis C.W."/>
            <person name="Boore J.L."/>
            <person name="Jansen R.K."/>
        </authorList>
    </citation>
    <scope>NUCLEOTIDE SEQUENCE [LARGE SCALE GENOMIC DNA]</scope>
</reference>
<feature type="chain" id="PRO_0000275487" description="Cytochrome b6-f complex subunit 5">
    <location>
        <begin position="1"/>
        <end position="37"/>
    </location>
</feature>
<feature type="transmembrane region" description="Helical" evidence="1">
    <location>
        <begin position="5"/>
        <end position="25"/>
    </location>
</feature>
<keyword id="KW-0150">Chloroplast</keyword>
<keyword id="KW-0249">Electron transport</keyword>
<keyword id="KW-0472">Membrane</keyword>
<keyword id="KW-0602">Photosynthesis</keyword>
<keyword id="KW-0934">Plastid</keyword>
<keyword id="KW-0793">Thylakoid</keyword>
<keyword id="KW-0812">Transmembrane</keyword>
<keyword id="KW-1133">Transmembrane helix</keyword>
<keyword id="KW-0813">Transport</keyword>
<geneLocation type="chloroplast"/>
<name>PETG_DRIGR</name>
<comment type="function">
    <text evidence="1">Component of the cytochrome b6-f complex, which mediates electron transfer between photosystem II (PSII) and photosystem I (PSI), cyclic electron flow around PSI, and state transitions. PetG is required for either the stability or assembly of the cytochrome b6-f complex.</text>
</comment>
<comment type="subunit">
    <text evidence="1">The 4 large subunits of the cytochrome b6-f complex are cytochrome b6, subunit IV (17 kDa polypeptide, PetD), cytochrome f and the Rieske protein, while the 4 small subunits are PetG, PetL, PetM and PetN. The complex functions as a dimer.</text>
</comment>
<comment type="subcellular location">
    <subcellularLocation>
        <location evidence="1">Plastid</location>
        <location evidence="1">Chloroplast thylakoid membrane</location>
        <topology evidence="1">Single-pass membrane protein</topology>
    </subcellularLocation>
</comment>
<comment type="similarity">
    <text evidence="1">Belongs to the PetG family.</text>
</comment>
<evidence type="ECO:0000255" key="1">
    <source>
        <dbReference type="HAMAP-Rule" id="MF_00432"/>
    </source>
</evidence>
<protein>
    <recommendedName>
        <fullName evidence="1">Cytochrome b6-f complex subunit 5</fullName>
    </recommendedName>
    <alternativeName>
        <fullName evidence="1">Cytochrome b6-f complex subunit PetG</fullName>
    </alternativeName>
    <alternativeName>
        <fullName evidence="1">Cytochrome b6-f complex subunit V</fullName>
    </alternativeName>
</protein>
<accession>Q06GX8</accession>